<evidence type="ECO:0000255" key="1">
    <source>
        <dbReference type="HAMAP-Rule" id="MF_01315"/>
    </source>
</evidence>
<evidence type="ECO:0000305" key="2"/>
<keyword id="KW-1185">Reference proteome</keyword>
<keyword id="KW-0687">Ribonucleoprotein</keyword>
<keyword id="KW-0689">Ribosomal protein</keyword>
<keyword id="KW-0694">RNA-binding</keyword>
<keyword id="KW-0699">rRNA-binding</keyword>
<reference key="1">
    <citation type="journal article" date="2002" name="Proc. Natl. Acad. Sci. U.S.A.">
        <title>Genome sequence of the hyperthermophilic crenarchaeon Pyrobaculum aerophilum.</title>
        <authorList>
            <person name="Fitz-Gibbon S.T."/>
            <person name="Ladner H."/>
            <person name="Kim U.-J."/>
            <person name="Stetter K.O."/>
            <person name="Simon M.I."/>
            <person name="Miller J.H."/>
        </authorList>
    </citation>
    <scope>NUCLEOTIDE SEQUENCE [LARGE SCALE GENOMIC DNA]</scope>
    <source>
        <strain>ATCC 51768 / DSM 7523 / JCM 9630 / CIP 104966 / NBRC 100827 / IM2</strain>
    </source>
</reference>
<proteinExistence type="inferred from homology"/>
<organism>
    <name type="scientific">Pyrobaculum aerophilum (strain ATCC 51768 / DSM 7523 / JCM 9630 / CIP 104966 / NBRC 100827 / IM2)</name>
    <dbReference type="NCBI Taxonomy" id="178306"/>
    <lineage>
        <taxon>Archaea</taxon>
        <taxon>Thermoproteota</taxon>
        <taxon>Thermoprotei</taxon>
        <taxon>Thermoproteales</taxon>
        <taxon>Thermoproteaceae</taxon>
        <taxon>Pyrobaculum</taxon>
    </lineage>
</organism>
<comment type="function">
    <text evidence="1">Located at the top of the head of the 30S subunit, it contacts several helices of the 16S rRNA. In the 70S ribosome it contacts the 23S rRNA (bridge B1a) and protein L5 of the 50S subunit (bridge B1b), connecting the 2 subunits; these bridges are implicated in subunit movement.</text>
</comment>
<comment type="subunit">
    <text evidence="1">Part of the 30S ribosomal subunit. Forms a loose heterodimer with protein S19. Forms two bridges to the 50S subunit in the 70S ribosome.</text>
</comment>
<comment type="similarity">
    <text evidence="1">Belongs to the universal ribosomal protein uS13 family.</text>
</comment>
<feature type="chain" id="PRO_0000132186" description="Small ribosomal subunit protein uS13">
    <location>
        <begin position="1"/>
        <end position="152"/>
    </location>
</feature>
<protein>
    <recommendedName>
        <fullName evidence="1">Small ribosomal subunit protein uS13</fullName>
    </recommendedName>
    <alternativeName>
        <fullName evidence="2">30S ribosomal protein S13</fullName>
    </alternativeName>
</protein>
<accession>Q8ZTV0</accession>
<sequence>MSQEIRAIVRIGDTDLDGNKQVAYALAKIRGIGIASAYAICWKLGIDPHAILGALPEDQINKLDWAVRNLHELAPAWFLNRRKDPETGRDLHLIGSELVLAAKRDVDLMKKLKSWKGVRHSLGLKVRGQRTVTTGRFGATAGVTKKKAAAGK</sequence>
<name>RS13_PYRAE</name>
<dbReference type="EMBL" id="AE009441">
    <property type="protein sequence ID" value="AAL64659.1"/>
    <property type="molecule type" value="Genomic_DNA"/>
</dbReference>
<dbReference type="RefSeq" id="WP_011009127.1">
    <property type="nucleotide sequence ID" value="NC_003364.1"/>
</dbReference>
<dbReference type="SMR" id="Q8ZTV0"/>
<dbReference type="FunCoup" id="Q8ZTV0">
    <property type="interactions" value="221"/>
</dbReference>
<dbReference type="STRING" id="178306.PAE3085"/>
<dbReference type="EnsemblBacteria" id="AAL64659">
    <property type="protein sequence ID" value="AAL64659"/>
    <property type="gene ID" value="PAE3085"/>
</dbReference>
<dbReference type="GeneID" id="1463834"/>
<dbReference type="KEGG" id="pai:PAE3085"/>
<dbReference type="PATRIC" id="fig|178306.9.peg.2318"/>
<dbReference type="eggNOG" id="arCOG01722">
    <property type="taxonomic scope" value="Archaea"/>
</dbReference>
<dbReference type="HOGENOM" id="CLU_103849_0_0_2"/>
<dbReference type="InParanoid" id="Q8ZTV0"/>
<dbReference type="Proteomes" id="UP000002439">
    <property type="component" value="Chromosome"/>
</dbReference>
<dbReference type="GO" id="GO:0005829">
    <property type="term" value="C:cytosol"/>
    <property type="evidence" value="ECO:0000318"/>
    <property type="project" value="GO_Central"/>
</dbReference>
<dbReference type="GO" id="GO:0015935">
    <property type="term" value="C:small ribosomal subunit"/>
    <property type="evidence" value="ECO:0000318"/>
    <property type="project" value="GO_Central"/>
</dbReference>
<dbReference type="GO" id="GO:0019843">
    <property type="term" value="F:rRNA binding"/>
    <property type="evidence" value="ECO:0007669"/>
    <property type="project" value="UniProtKB-UniRule"/>
</dbReference>
<dbReference type="GO" id="GO:0003735">
    <property type="term" value="F:structural constituent of ribosome"/>
    <property type="evidence" value="ECO:0007669"/>
    <property type="project" value="InterPro"/>
</dbReference>
<dbReference type="GO" id="GO:0006412">
    <property type="term" value="P:translation"/>
    <property type="evidence" value="ECO:0007669"/>
    <property type="project" value="UniProtKB-UniRule"/>
</dbReference>
<dbReference type="FunFam" id="1.10.8.50:FF:000027">
    <property type="entry name" value="30S ribosomal protein S13"/>
    <property type="match status" value="1"/>
</dbReference>
<dbReference type="Gene3D" id="1.10.8.50">
    <property type="match status" value="1"/>
</dbReference>
<dbReference type="Gene3D" id="4.10.910.10">
    <property type="entry name" value="30s ribosomal protein s13, domain 2"/>
    <property type="match status" value="1"/>
</dbReference>
<dbReference type="HAMAP" id="MF_01315">
    <property type="entry name" value="Ribosomal_uS13"/>
    <property type="match status" value="1"/>
</dbReference>
<dbReference type="InterPro" id="IPR027437">
    <property type="entry name" value="Rbsml_uS13_C"/>
</dbReference>
<dbReference type="InterPro" id="IPR001892">
    <property type="entry name" value="Ribosomal_uS13"/>
</dbReference>
<dbReference type="InterPro" id="IPR010979">
    <property type="entry name" value="Ribosomal_uS13-like_H2TH"/>
</dbReference>
<dbReference type="InterPro" id="IPR019977">
    <property type="entry name" value="Ribosomal_uS13_archaeal"/>
</dbReference>
<dbReference type="InterPro" id="IPR018269">
    <property type="entry name" value="Ribosomal_uS13_CS"/>
</dbReference>
<dbReference type="NCBIfam" id="NF003140">
    <property type="entry name" value="PRK04053.1"/>
    <property type="match status" value="1"/>
</dbReference>
<dbReference type="NCBIfam" id="TIGR03629">
    <property type="entry name" value="uS13_arch"/>
    <property type="match status" value="1"/>
</dbReference>
<dbReference type="PANTHER" id="PTHR10871">
    <property type="entry name" value="30S RIBOSOMAL PROTEIN S13/40S RIBOSOMAL PROTEIN S18"/>
    <property type="match status" value="1"/>
</dbReference>
<dbReference type="PANTHER" id="PTHR10871:SF3">
    <property type="entry name" value="SMALL RIBOSOMAL SUBUNIT PROTEIN US13"/>
    <property type="match status" value="1"/>
</dbReference>
<dbReference type="Pfam" id="PF00416">
    <property type="entry name" value="Ribosomal_S13"/>
    <property type="match status" value="1"/>
</dbReference>
<dbReference type="PIRSF" id="PIRSF002134">
    <property type="entry name" value="Ribosomal_S13"/>
    <property type="match status" value="1"/>
</dbReference>
<dbReference type="SUPFAM" id="SSF46946">
    <property type="entry name" value="S13-like H2TH domain"/>
    <property type="match status" value="1"/>
</dbReference>
<dbReference type="PROSITE" id="PS00646">
    <property type="entry name" value="RIBOSOMAL_S13_1"/>
    <property type="match status" value="1"/>
</dbReference>
<dbReference type="PROSITE" id="PS50159">
    <property type="entry name" value="RIBOSOMAL_S13_2"/>
    <property type="match status" value="1"/>
</dbReference>
<gene>
    <name evidence="1" type="primary">rps13</name>
    <name type="ordered locus">PAE3085</name>
</gene>